<evidence type="ECO:0000250" key="1">
    <source>
        <dbReference type="UniProtKB" id="P28007"/>
    </source>
</evidence>
<evidence type="ECO:0000256" key="2">
    <source>
        <dbReference type="SAM" id="MobiDB-lite"/>
    </source>
</evidence>
<evidence type="ECO:0000305" key="3"/>
<organism>
    <name type="scientific">Debaryomyces hansenii (strain ATCC 36239 / CBS 767 / BCRC 21394 / JCM 1990 / NBRC 0083 / IGC 2968)</name>
    <name type="common">Yeast</name>
    <name type="synonym">Torulaspora hansenii</name>
    <dbReference type="NCBI Taxonomy" id="284592"/>
    <lineage>
        <taxon>Eukaryota</taxon>
        <taxon>Fungi</taxon>
        <taxon>Dikarya</taxon>
        <taxon>Ascomycota</taxon>
        <taxon>Saccharomycotina</taxon>
        <taxon>Pichiomycetes</taxon>
        <taxon>Debaryomycetaceae</taxon>
        <taxon>Debaryomyces</taxon>
    </lineage>
</organism>
<comment type="function">
    <text evidence="1">Non-catalytic component of the H/ACA small nucleolar ribonucleoprotein (H/ACA snoRNP), which catalyzes pseudouridylation of rRNA and is required for ribosome biogenesis. This involves the isomerization of uridine such that the ribose is subsequently attached to C5, instead of the normal N1. Pseudouridine ('psi') residues may serve to stabilize the conformation of rRNAs. The H/ACA snoRNP complex also mediates pseudouridylation of other types of RNAs. The H/ACA snoRNP complex mediates pseudouridylation at position 93 in U2 snRNA.</text>
</comment>
<comment type="subunit">
    <text evidence="1">Component of the small nucleolar ribonucleoprotein particles containing H/ACA-type snoRNAs (H/ACA snoRNPs).</text>
</comment>
<comment type="subcellular location">
    <subcellularLocation>
        <location evidence="1">Nucleus</location>
        <location evidence="1">Nucleolus</location>
    </subcellularLocation>
</comment>
<comment type="similarity">
    <text evidence="3">Belongs to the GAR1 family.</text>
</comment>
<feature type="chain" id="PRO_0000327528" description="H/ACA ribonucleoprotein complex subunit GAR1">
    <location>
        <begin position="1"/>
        <end position="215"/>
    </location>
</feature>
<feature type="region of interest" description="Disordered" evidence="2">
    <location>
        <begin position="1"/>
        <end position="26"/>
    </location>
</feature>
<feature type="region of interest" description="RGG-box 1">
    <location>
        <begin position="5"/>
        <end position="17"/>
    </location>
</feature>
<feature type="region of interest" description="Disordered" evidence="2">
    <location>
        <begin position="117"/>
        <end position="215"/>
    </location>
</feature>
<feature type="region of interest" description="RGG-box 2">
    <location>
        <begin position="135"/>
        <end position="213"/>
    </location>
</feature>
<feature type="compositionally biased region" description="Gly residues" evidence="2">
    <location>
        <begin position="1"/>
        <end position="16"/>
    </location>
</feature>
<feature type="compositionally biased region" description="Gly residues" evidence="2">
    <location>
        <begin position="131"/>
        <end position="215"/>
    </location>
</feature>
<sequence length="215" mass="22109">MNRGRGGFRGGRGGRTGPSQFQQGPPDTVLEMGAFMQSCEGDIVCRSINVKIPYFNAPIYLENKTQVGKVDEILGPVNEVFFTIKPSEGVQADSFKDGDKFYIGPDKLLPLERFLPKPKEFGTKPKKKSAGGAGRGGFGGRGGARGGRGGFGGRGGSRGGFGDRGGRGGSRGGFGGRGGSRGGFGDRGGFGGRGGSRGGFGDRGGRGGGFRGGRF</sequence>
<gene>
    <name type="primary">GAR1</name>
    <name type="ordered locus">DEHA2C02992g</name>
</gene>
<protein>
    <recommendedName>
        <fullName>H/ACA ribonucleoprotein complex subunit GAR1</fullName>
    </recommendedName>
    <alternativeName>
        <fullName>snoRNP protein GAR1</fullName>
    </alternativeName>
</protein>
<keyword id="KW-0539">Nucleus</keyword>
<keyword id="KW-1185">Reference proteome</keyword>
<keyword id="KW-0677">Repeat</keyword>
<keyword id="KW-0687">Ribonucleoprotein</keyword>
<keyword id="KW-0690">Ribosome biogenesis</keyword>
<keyword id="KW-0694">RNA-binding</keyword>
<keyword id="KW-0698">rRNA processing</keyword>
<proteinExistence type="inferred from homology"/>
<accession>Q6BVF9</accession>
<reference key="1">
    <citation type="journal article" date="2004" name="Nature">
        <title>Genome evolution in yeasts.</title>
        <authorList>
            <person name="Dujon B."/>
            <person name="Sherman D."/>
            <person name="Fischer G."/>
            <person name="Durrens P."/>
            <person name="Casaregola S."/>
            <person name="Lafontaine I."/>
            <person name="de Montigny J."/>
            <person name="Marck C."/>
            <person name="Neuveglise C."/>
            <person name="Talla E."/>
            <person name="Goffard N."/>
            <person name="Frangeul L."/>
            <person name="Aigle M."/>
            <person name="Anthouard V."/>
            <person name="Babour A."/>
            <person name="Barbe V."/>
            <person name="Barnay S."/>
            <person name="Blanchin S."/>
            <person name="Beckerich J.-M."/>
            <person name="Beyne E."/>
            <person name="Bleykasten C."/>
            <person name="Boisrame A."/>
            <person name="Boyer J."/>
            <person name="Cattolico L."/>
            <person name="Confanioleri F."/>
            <person name="de Daruvar A."/>
            <person name="Despons L."/>
            <person name="Fabre E."/>
            <person name="Fairhead C."/>
            <person name="Ferry-Dumazet H."/>
            <person name="Groppi A."/>
            <person name="Hantraye F."/>
            <person name="Hennequin C."/>
            <person name="Jauniaux N."/>
            <person name="Joyet P."/>
            <person name="Kachouri R."/>
            <person name="Kerrest A."/>
            <person name="Koszul R."/>
            <person name="Lemaire M."/>
            <person name="Lesur I."/>
            <person name="Ma L."/>
            <person name="Muller H."/>
            <person name="Nicaud J.-M."/>
            <person name="Nikolski M."/>
            <person name="Oztas S."/>
            <person name="Ozier-Kalogeropoulos O."/>
            <person name="Pellenz S."/>
            <person name="Potier S."/>
            <person name="Richard G.-F."/>
            <person name="Straub M.-L."/>
            <person name="Suleau A."/>
            <person name="Swennen D."/>
            <person name="Tekaia F."/>
            <person name="Wesolowski-Louvel M."/>
            <person name="Westhof E."/>
            <person name="Wirth B."/>
            <person name="Zeniou-Meyer M."/>
            <person name="Zivanovic Y."/>
            <person name="Bolotin-Fukuhara M."/>
            <person name="Thierry A."/>
            <person name="Bouchier C."/>
            <person name="Caudron B."/>
            <person name="Scarpelli C."/>
            <person name="Gaillardin C."/>
            <person name="Weissenbach J."/>
            <person name="Wincker P."/>
            <person name="Souciet J.-L."/>
        </authorList>
    </citation>
    <scope>NUCLEOTIDE SEQUENCE [LARGE SCALE GENOMIC DNA]</scope>
    <source>
        <strain>ATCC 36239 / CBS 767 / BCRC 21394 / JCM 1990 / NBRC 0083 / IGC 2968</strain>
    </source>
</reference>
<name>GAR1_DEBHA</name>
<dbReference type="EMBL" id="CR382135">
    <property type="protein sequence ID" value="CAG85850.1"/>
    <property type="molecule type" value="Genomic_DNA"/>
</dbReference>
<dbReference type="RefSeq" id="XP_457810.1">
    <property type="nucleotide sequence ID" value="XM_457810.1"/>
</dbReference>
<dbReference type="SMR" id="Q6BVF9"/>
<dbReference type="FunCoup" id="Q6BVF9">
    <property type="interactions" value="649"/>
</dbReference>
<dbReference type="STRING" id="284592.Q6BVF9"/>
<dbReference type="GeneID" id="2900261"/>
<dbReference type="KEGG" id="dha:DEHA2C02992g"/>
<dbReference type="VEuPathDB" id="FungiDB:DEHA2C02992g"/>
<dbReference type="eggNOG" id="KOG3262">
    <property type="taxonomic scope" value="Eukaryota"/>
</dbReference>
<dbReference type="HOGENOM" id="CLU_080002_1_0_1"/>
<dbReference type="InParanoid" id="Q6BVF9"/>
<dbReference type="OMA" id="KPQDGIV"/>
<dbReference type="OrthoDB" id="2187159at2759"/>
<dbReference type="Proteomes" id="UP000000599">
    <property type="component" value="Chromosome C"/>
</dbReference>
<dbReference type="GO" id="GO:0031429">
    <property type="term" value="C:box H/ACA snoRNP complex"/>
    <property type="evidence" value="ECO:0007669"/>
    <property type="project" value="TreeGrafter"/>
</dbReference>
<dbReference type="GO" id="GO:0034513">
    <property type="term" value="F:box H/ACA snoRNA binding"/>
    <property type="evidence" value="ECO:0007669"/>
    <property type="project" value="TreeGrafter"/>
</dbReference>
<dbReference type="GO" id="GO:0000454">
    <property type="term" value="P:snoRNA guided rRNA pseudouridine synthesis"/>
    <property type="evidence" value="ECO:0007669"/>
    <property type="project" value="TreeGrafter"/>
</dbReference>
<dbReference type="FunFam" id="2.40.10.230:FF:000001">
    <property type="entry name" value="H/ACA ribonucleoprotein complex subunit"/>
    <property type="match status" value="1"/>
</dbReference>
<dbReference type="Gene3D" id="2.40.10.230">
    <property type="entry name" value="Probable tRNA pseudouridine synthase domain"/>
    <property type="match status" value="1"/>
</dbReference>
<dbReference type="InterPro" id="IPR038664">
    <property type="entry name" value="Gar1/Naf1_Cbf5-bd_sf"/>
</dbReference>
<dbReference type="InterPro" id="IPR007504">
    <property type="entry name" value="H/ACA_rnp_Gar1/Naf1"/>
</dbReference>
<dbReference type="InterPro" id="IPR009000">
    <property type="entry name" value="Transl_B-barrel_sf"/>
</dbReference>
<dbReference type="PANTHER" id="PTHR23237:SF6">
    <property type="entry name" value="H_ACA RIBONUCLEOPROTEIN COMPLEX SUBUNIT 1"/>
    <property type="match status" value="1"/>
</dbReference>
<dbReference type="PANTHER" id="PTHR23237">
    <property type="entry name" value="NUCLEOLAR PROTEIN FAMILY A MEMBER 1 SNORNP PROTEIN GAR1"/>
    <property type="match status" value="1"/>
</dbReference>
<dbReference type="Pfam" id="PF04410">
    <property type="entry name" value="Gar1"/>
    <property type="match status" value="1"/>
</dbReference>
<dbReference type="SUPFAM" id="SSF50447">
    <property type="entry name" value="Translation proteins"/>
    <property type="match status" value="1"/>
</dbReference>